<dbReference type="EC" id="2.7.1.59" evidence="1"/>
<dbReference type="EMBL" id="CP000057">
    <property type="protein sequence ID" value="AAX87239.1"/>
    <property type="molecule type" value="Genomic_DNA"/>
</dbReference>
<dbReference type="RefSeq" id="WP_011271911.1">
    <property type="nucleotide sequence ID" value="NC_007146.2"/>
</dbReference>
<dbReference type="SMR" id="Q4QP08"/>
<dbReference type="KEGG" id="hit:NTHI0273"/>
<dbReference type="HOGENOM" id="CLU_036604_0_3_6"/>
<dbReference type="UniPathway" id="UPA00544"/>
<dbReference type="Proteomes" id="UP000002525">
    <property type="component" value="Chromosome"/>
</dbReference>
<dbReference type="GO" id="GO:0005524">
    <property type="term" value="F:ATP binding"/>
    <property type="evidence" value="ECO:0007669"/>
    <property type="project" value="UniProtKB-UniRule"/>
</dbReference>
<dbReference type="GO" id="GO:0045127">
    <property type="term" value="F:N-acetylglucosamine kinase activity"/>
    <property type="evidence" value="ECO:0007669"/>
    <property type="project" value="UniProtKB-UniRule"/>
</dbReference>
<dbReference type="GO" id="GO:0008270">
    <property type="term" value="F:zinc ion binding"/>
    <property type="evidence" value="ECO:0007669"/>
    <property type="project" value="UniProtKB-UniRule"/>
</dbReference>
<dbReference type="GO" id="GO:0006044">
    <property type="term" value="P:N-acetylglucosamine metabolic process"/>
    <property type="evidence" value="ECO:0007669"/>
    <property type="project" value="UniProtKB-UniRule"/>
</dbReference>
<dbReference type="GO" id="GO:0009254">
    <property type="term" value="P:peptidoglycan turnover"/>
    <property type="evidence" value="ECO:0007669"/>
    <property type="project" value="UniProtKB-UniRule"/>
</dbReference>
<dbReference type="CDD" id="cd24057">
    <property type="entry name" value="ASKHA_NBD_ROK_NAGK"/>
    <property type="match status" value="1"/>
</dbReference>
<dbReference type="FunFam" id="3.30.420.40:FF:000049">
    <property type="entry name" value="N-acetyl-D-glucosamine kinase"/>
    <property type="match status" value="1"/>
</dbReference>
<dbReference type="FunFam" id="3.30.420.40:FF:000051">
    <property type="entry name" value="N-acetyl-D-glucosamine kinase"/>
    <property type="match status" value="1"/>
</dbReference>
<dbReference type="Gene3D" id="3.30.420.40">
    <property type="match status" value="2"/>
</dbReference>
<dbReference type="HAMAP" id="MF_01271">
    <property type="entry name" value="GlcNAc_kinase"/>
    <property type="match status" value="1"/>
</dbReference>
<dbReference type="InterPro" id="IPR043129">
    <property type="entry name" value="ATPase_NBD"/>
</dbReference>
<dbReference type="InterPro" id="IPR023505">
    <property type="entry name" value="N-acetyl-D-glucosamine_kinase"/>
</dbReference>
<dbReference type="InterPro" id="IPR000600">
    <property type="entry name" value="ROK"/>
</dbReference>
<dbReference type="InterPro" id="IPR049874">
    <property type="entry name" value="ROK_cs"/>
</dbReference>
<dbReference type="NCBIfam" id="NF009835">
    <property type="entry name" value="PRK13310.1"/>
    <property type="match status" value="1"/>
</dbReference>
<dbReference type="PANTHER" id="PTHR18964:SF162">
    <property type="entry name" value="N-ACETYL-D-GLUCOSAMINE KINASE"/>
    <property type="match status" value="1"/>
</dbReference>
<dbReference type="PANTHER" id="PTHR18964">
    <property type="entry name" value="ROK (REPRESSOR, ORF, KINASE) FAMILY"/>
    <property type="match status" value="1"/>
</dbReference>
<dbReference type="Pfam" id="PF00480">
    <property type="entry name" value="ROK"/>
    <property type="match status" value="1"/>
</dbReference>
<dbReference type="SUPFAM" id="SSF53067">
    <property type="entry name" value="Actin-like ATPase domain"/>
    <property type="match status" value="1"/>
</dbReference>
<dbReference type="PROSITE" id="PS01125">
    <property type="entry name" value="ROK"/>
    <property type="match status" value="1"/>
</dbReference>
<evidence type="ECO:0000255" key="1">
    <source>
        <dbReference type="HAMAP-Rule" id="MF_01271"/>
    </source>
</evidence>
<comment type="function">
    <text evidence="1">Catalyzes the phosphorylation of N-acetyl-D-glucosamine (GlcNAc) derived from cell-wall degradation, yielding GlcNAc-6-P.</text>
</comment>
<comment type="catalytic activity">
    <reaction evidence="1">
        <text>N-acetyl-D-glucosamine + ATP = N-acetyl-D-glucosamine 6-phosphate + ADP + H(+)</text>
        <dbReference type="Rhea" id="RHEA:17417"/>
        <dbReference type="ChEBI" id="CHEBI:15378"/>
        <dbReference type="ChEBI" id="CHEBI:30616"/>
        <dbReference type="ChEBI" id="CHEBI:57513"/>
        <dbReference type="ChEBI" id="CHEBI:456216"/>
        <dbReference type="ChEBI" id="CHEBI:506227"/>
        <dbReference type="EC" id="2.7.1.59"/>
    </reaction>
</comment>
<comment type="pathway">
    <text evidence="1">Cell wall biogenesis; peptidoglycan recycling.</text>
</comment>
<comment type="similarity">
    <text evidence="1">Belongs to the ROK (NagC/XylR) family. NagK subfamily.</text>
</comment>
<accession>Q4QP08</accession>
<name>NAGK_HAEI8</name>
<feature type="chain" id="PRO_0000270106" description="N-acetyl-D-glucosamine kinase">
    <location>
        <begin position="1"/>
        <end position="304"/>
    </location>
</feature>
<feature type="binding site" evidence="1">
    <location>
        <begin position="4"/>
        <end position="11"/>
    </location>
    <ligand>
        <name>ATP</name>
        <dbReference type="ChEBI" id="CHEBI:30616"/>
    </ligand>
</feature>
<feature type="binding site" evidence="1">
    <location>
        <begin position="133"/>
        <end position="140"/>
    </location>
    <ligand>
        <name>ATP</name>
        <dbReference type="ChEBI" id="CHEBI:30616"/>
    </ligand>
</feature>
<feature type="binding site" evidence="1">
    <location>
        <position position="157"/>
    </location>
    <ligand>
        <name>Zn(2+)</name>
        <dbReference type="ChEBI" id="CHEBI:29105"/>
    </ligand>
</feature>
<feature type="binding site" evidence="1">
    <location>
        <position position="178"/>
    </location>
    <ligand>
        <name>Zn(2+)</name>
        <dbReference type="ChEBI" id="CHEBI:29105"/>
    </ligand>
</feature>
<feature type="binding site" evidence="1">
    <location>
        <position position="180"/>
    </location>
    <ligand>
        <name>Zn(2+)</name>
        <dbReference type="ChEBI" id="CHEBI:29105"/>
    </ligand>
</feature>
<feature type="binding site" evidence="1">
    <location>
        <position position="185"/>
    </location>
    <ligand>
        <name>Zn(2+)</name>
        <dbReference type="ChEBI" id="CHEBI:29105"/>
    </ligand>
</feature>
<reference key="1">
    <citation type="journal article" date="2005" name="J. Bacteriol.">
        <title>Genomic sequence of an otitis media isolate of nontypeable Haemophilus influenzae: comparative study with H. influenzae serotype d, strain KW20.</title>
        <authorList>
            <person name="Harrison A."/>
            <person name="Dyer D.W."/>
            <person name="Gillaspy A."/>
            <person name="Ray W.C."/>
            <person name="Mungur R."/>
            <person name="Carson M.B."/>
            <person name="Zhong H."/>
            <person name="Gipson J."/>
            <person name="Gipson M."/>
            <person name="Johnson L.S."/>
            <person name="Lewis L."/>
            <person name="Bakaletz L.O."/>
            <person name="Munson R.S. Jr."/>
        </authorList>
    </citation>
    <scope>NUCLEOTIDE SEQUENCE [LARGE SCALE GENOMIC DNA]</scope>
    <source>
        <strain>86-028NP</strain>
    </source>
</reference>
<organism>
    <name type="scientific">Haemophilus influenzae (strain 86-028NP)</name>
    <dbReference type="NCBI Taxonomy" id="281310"/>
    <lineage>
        <taxon>Bacteria</taxon>
        <taxon>Pseudomonadati</taxon>
        <taxon>Pseudomonadota</taxon>
        <taxon>Gammaproteobacteria</taxon>
        <taxon>Pasteurellales</taxon>
        <taxon>Pasteurellaceae</taxon>
        <taxon>Haemophilus</taxon>
    </lineage>
</organism>
<keyword id="KW-0067">ATP-binding</keyword>
<keyword id="KW-0119">Carbohydrate metabolism</keyword>
<keyword id="KW-0418">Kinase</keyword>
<keyword id="KW-0479">Metal-binding</keyword>
<keyword id="KW-0547">Nucleotide-binding</keyword>
<keyword id="KW-0808">Transferase</keyword>
<keyword id="KW-0862">Zinc</keyword>
<proteinExistence type="inferred from homology"/>
<gene>
    <name evidence="1" type="primary">nagK</name>
    <name type="ordered locus">NTHI0273</name>
</gene>
<protein>
    <recommendedName>
        <fullName evidence="1">N-acetyl-D-glucosamine kinase</fullName>
        <ecNumber evidence="1">2.7.1.59</ecNumber>
    </recommendedName>
    <alternativeName>
        <fullName evidence="1">GlcNAc kinase</fullName>
    </alternativeName>
</protein>
<sequence>MYYGLDIGGTKIELAVFNEELEKLYSERVPTPKTDYEEWLNTIVDLVNRADEKFGEVGTVGLGVPGFVNQQTGLAEITNIRVADNKPILRDLSVRLGREVRAENDANCFALSEAWDTENQQYPTVLGLILGTGFGGGFVLNGKVHSGQVGMAGELGHLQLNYHALKLLGWDNAPIYQCGCGNKACLDNYLSGRGFEMLYRDLKGETLSAREIIDLFYQGNESAVDFVNLFVELAAISIGNIITAFDPHMIVLGGGLSNFDYLYEALPKALPPHLMRTAKVPPIKKAKHGDSGGVRGAAALFLTK</sequence>